<keyword id="KW-0067">ATP-binding</keyword>
<keyword id="KW-0173">Coenzyme A biosynthesis</keyword>
<keyword id="KW-0963">Cytoplasm</keyword>
<keyword id="KW-0418">Kinase</keyword>
<keyword id="KW-0547">Nucleotide-binding</keyword>
<keyword id="KW-1185">Reference proteome</keyword>
<keyword id="KW-0808">Transferase</keyword>
<comment type="catalytic activity">
    <reaction evidence="1">
        <text>(R)-pantothenate + ATP = (R)-4'-phosphopantothenate + ADP + H(+)</text>
        <dbReference type="Rhea" id="RHEA:16373"/>
        <dbReference type="ChEBI" id="CHEBI:10986"/>
        <dbReference type="ChEBI" id="CHEBI:15378"/>
        <dbReference type="ChEBI" id="CHEBI:29032"/>
        <dbReference type="ChEBI" id="CHEBI:30616"/>
        <dbReference type="ChEBI" id="CHEBI:456216"/>
        <dbReference type="EC" id="2.7.1.33"/>
    </reaction>
</comment>
<comment type="pathway">
    <text evidence="1">Cofactor biosynthesis; coenzyme A biosynthesis; CoA from (R)-pantothenate: step 1/5.</text>
</comment>
<comment type="subcellular location">
    <subcellularLocation>
        <location evidence="1">Cytoplasm</location>
    </subcellularLocation>
</comment>
<comment type="similarity">
    <text evidence="1">Belongs to the prokaryotic pantothenate kinase family.</text>
</comment>
<evidence type="ECO:0000255" key="1">
    <source>
        <dbReference type="HAMAP-Rule" id="MF_00215"/>
    </source>
</evidence>
<sequence>MAENGAARGGTSAGGDSSTPFVELGRADWAELAQSARLPLQEAEIVQLRGLGDPLDMREVGEVYLPLSRLLNLYVGGTRQLHRVTSDFLGERAQATPFVIGVAGSVAVGKSTIARLLRELLSRWDDTPRVELVTTDGFLLPNAELERRGLMRRKGFPESYDRRALLRFVTAVKSGAREVRAPFYSHLSYDIVPGAEIVVRQPDVLIVEGLTVLQPAGGGTRLAVSDLFDFSVYVDARTRDIAHWYQERFLTLQRGAFANPKSYFHRYASLTEEEARARAAAIWADINEPNLTQNIRPTRSRAKLVLRKDADHTVSSVLLRKI</sequence>
<organism>
    <name type="scientific">Leifsonia xyli subsp. xyli (strain CTCB07)</name>
    <dbReference type="NCBI Taxonomy" id="281090"/>
    <lineage>
        <taxon>Bacteria</taxon>
        <taxon>Bacillati</taxon>
        <taxon>Actinomycetota</taxon>
        <taxon>Actinomycetes</taxon>
        <taxon>Micrococcales</taxon>
        <taxon>Microbacteriaceae</taxon>
        <taxon>Leifsonia</taxon>
    </lineage>
</organism>
<name>COAA_LEIXX</name>
<protein>
    <recommendedName>
        <fullName evidence="1">Pantothenate kinase</fullName>
        <ecNumber evidence="1">2.7.1.33</ecNumber>
    </recommendedName>
    <alternativeName>
        <fullName evidence="1">Pantothenic acid kinase</fullName>
    </alternativeName>
</protein>
<gene>
    <name evidence="1" type="primary">coaA</name>
    <name type="ordered locus">Lxx19970</name>
</gene>
<proteinExistence type="inferred from homology"/>
<dbReference type="EC" id="2.7.1.33" evidence="1"/>
<dbReference type="EMBL" id="AE016822">
    <property type="protein sequence ID" value="AAT89713.1"/>
    <property type="molecule type" value="Genomic_DNA"/>
</dbReference>
<dbReference type="RefSeq" id="WP_011186699.1">
    <property type="nucleotide sequence ID" value="NC_006087.1"/>
</dbReference>
<dbReference type="SMR" id="Q6AD31"/>
<dbReference type="STRING" id="281090.Lxx19970"/>
<dbReference type="KEGG" id="lxx:Lxx19970"/>
<dbReference type="eggNOG" id="COG1072">
    <property type="taxonomic scope" value="Bacteria"/>
</dbReference>
<dbReference type="HOGENOM" id="CLU_053818_1_1_11"/>
<dbReference type="UniPathway" id="UPA00241">
    <property type="reaction ID" value="UER00352"/>
</dbReference>
<dbReference type="Proteomes" id="UP000001306">
    <property type="component" value="Chromosome"/>
</dbReference>
<dbReference type="GO" id="GO:0005737">
    <property type="term" value="C:cytoplasm"/>
    <property type="evidence" value="ECO:0007669"/>
    <property type="project" value="UniProtKB-SubCell"/>
</dbReference>
<dbReference type="GO" id="GO:0005524">
    <property type="term" value="F:ATP binding"/>
    <property type="evidence" value="ECO:0007669"/>
    <property type="project" value="UniProtKB-UniRule"/>
</dbReference>
<dbReference type="GO" id="GO:0004594">
    <property type="term" value="F:pantothenate kinase activity"/>
    <property type="evidence" value="ECO:0007669"/>
    <property type="project" value="UniProtKB-UniRule"/>
</dbReference>
<dbReference type="GO" id="GO:0015937">
    <property type="term" value="P:coenzyme A biosynthetic process"/>
    <property type="evidence" value="ECO:0007669"/>
    <property type="project" value="UniProtKB-UniRule"/>
</dbReference>
<dbReference type="CDD" id="cd02025">
    <property type="entry name" value="PanK"/>
    <property type="match status" value="1"/>
</dbReference>
<dbReference type="Gene3D" id="3.40.50.300">
    <property type="entry name" value="P-loop containing nucleotide triphosphate hydrolases"/>
    <property type="match status" value="1"/>
</dbReference>
<dbReference type="HAMAP" id="MF_00215">
    <property type="entry name" value="Pantothen_kinase_1"/>
    <property type="match status" value="1"/>
</dbReference>
<dbReference type="InterPro" id="IPR027417">
    <property type="entry name" value="P-loop_NTPase"/>
</dbReference>
<dbReference type="InterPro" id="IPR004566">
    <property type="entry name" value="PanK"/>
</dbReference>
<dbReference type="InterPro" id="IPR006083">
    <property type="entry name" value="PRK/URK"/>
</dbReference>
<dbReference type="NCBIfam" id="TIGR00554">
    <property type="entry name" value="panK_bact"/>
    <property type="match status" value="1"/>
</dbReference>
<dbReference type="PANTHER" id="PTHR10285">
    <property type="entry name" value="URIDINE KINASE"/>
    <property type="match status" value="1"/>
</dbReference>
<dbReference type="Pfam" id="PF00485">
    <property type="entry name" value="PRK"/>
    <property type="match status" value="1"/>
</dbReference>
<dbReference type="PIRSF" id="PIRSF000545">
    <property type="entry name" value="Pantothenate_kin"/>
    <property type="match status" value="1"/>
</dbReference>
<dbReference type="SUPFAM" id="SSF52540">
    <property type="entry name" value="P-loop containing nucleoside triphosphate hydrolases"/>
    <property type="match status" value="1"/>
</dbReference>
<accession>Q6AD31</accession>
<reference key="1">
    <citation type="journal article" date="2004" name="Mol. Plant Microbe Interact.">
        <title>The genome sequence of the Gram-positive sugarcane pathogen Leifsonia xyli subsp. xyli.</title>
        <authorList>
            <person name="Monteiro-Vitorello C.B."/>
            <person name="Camargo L.E.A."/>
            <person name="Van Sluys M.A."/>
            <person name="Kitajima J.P."/>
            <person name="Truffi D."/>
            <person name="do Amaral A.M."/>
            <person name="Harakava R."/>
            <person name="de Oliveira J.C.F."/>
            <person name="Wood D."/>
            <person name="de Oliveira M.C."/>
            <person name="Miyaki C.Y."/>
            <person name="Takita M.A."/>
            <person name="da Silva A.C.R."/>
            <person name="Furlan L.R."/>
            <person name="Carraro D.M."/>
            <person name="Camarotte G."/>
            <person name="Almeida N.F. Jr."/>
            <person name="Carrer H."/>
            <person name="Coutinho L.L."/>
            <person name="El-Dorry H.A."/>
            <person name="Ferro M.I.T."/>
            <person name="Gagliardi P.R."/>
            <person name="Giglioti E."/>
            <person name="Goldman M.H.S."/>
            <person name="Goldman G.H."/>
            <person name="Kimura E.T."/>
            <person name="Ferro E.S."/>
            <person name="Kuramae E.E."/>
            <person name="Lemos E.G.M."/>
            <person name="Lemos M.V.F."/>
            <person name="Mauro S.M.Z."/>
            <person name="Machado M.A."/>
            <person name="Marino C.L."/>
            <person name="Menck C.F."/>
            <person name="Nunes L.R."/>
            <person name="Oliveira R.C."/>
            <person name="Pereira G.G."/>
            <person name="Siqueira W."/>
            <person name="de Souza A.A."/>
            <person name="Tsai S.M."/>
            <person name="Zanca A.S."/>
            <person name="Simpson A.J.G."/>
            <person name="Brumbley S.M."/>
            <person name="Setubal J.C."/>
        </authorList>
    </citation>
    <scope>NUCLEOTIDE SEQUENCE [LARGE SCALE GENOMIC DNA]</scope>
    <source>
        <strain>CTCB07</strain>
    </source>
</reference>
<feature type="chain" id="PRO_0000194434" description="Pantothenate kinase">
    <location>
        <begin position="1"/>
        <end position="322"/>
    </location>
</feature>
<feature type="binding site" evidence="1">
    <location>
        <begin position="104"/>
        <end position="111"/>
    </location>
    <ligand>
        <name>ATP</name>
        <dbReference type="ChEBI" id="CHEBI:30616"/>
    </ligand>
</feature>